<organism>
    <name type="scientific">Brucella abortus (strain S19)</name>
    <dbReference type="NCBI Taxonomy" id="430066"/>
    <lineage>
        <taxon>Bacteria</taxon>
        <taxon>Pseudomonadati</taxon>
        <taxon>Pseudomonadota</taxon>
        <taxon>Alphaproteobacteria</taxon>
        <taxon>Hyphomicrobiales</taxon>
        <taxon>Brucellaceae</taxon>
        <taxon>Brucella/Ochrobactrum group</taxon>
        <taxon>Brucella</taxon>
    </lineage>
</organism>
<feature type="chain" id="PRO_1000092674" description="Imidazoleglycerol-phosphate dehydratase">
    <location>
        <begin position="1"/>
        <end position="202"/>
    </location>
</feature>
<sequence>MTAESTRKASIERSTKETSIAVSVDLDGVGKFDITTGVGFFDHMLEQLSRHSLIDMRVMAKGDLHIDDHHTVEDTGIALGQAVAKALGERRGIVRYASLDLAMDDTLTGAAVDVSGRAFLVWNVNFTTAKIGTFDTELVREFFQAFAMNAGITLHINNHYGANNHHIAESTFKAVARVLRAALETDPRQKDAIPSTKGSLKG</sequence>
<proteinExistence type="inferred from homology"/>
<gene>
    <name evidence="1" type="primary">hisB</name>
    <name type="ordered locus">BAbS19_I19500</name>
</gene>
<protein>
    <recommendedName>
        <fullName evidence="1">Imidazoleglycerol-phosphate dehydratase</fullName>
        <shortName evidence="1">IGPD</shortName>
        <ecNumber evidence="1">4.2.1.19</ecNumber>
    </recommendedName>
</protein>
<keyword id="KW-0028">Amino-acid biosynthesis</keyword>
<keyword id="KW-0963">Cytoplasm</keyword>
<keyword id="KW-0368">Histidine biosynthesis</keyword>
<keyword id="KW-0456">Lyase</keyword>
<reference key="1">
    <citation type="journal article" date="2008" name="PLoS ONE">
        <title>Genome sequence of Brucella abortus vaccine strain S19 compared to virulent strains yields candidate virulence genes.</title>
        <authorList>
            <person name="Crasta O.R."/>
            <person name="Folkerts O."/>
            <person name="Fei Z."/>
            <person name="Mane S.P."/>
            <person name="Evans C."/>
            <person name="Martino-Catt S."/>
            <person name="Bricker B."/>
            <person name="Yu G."/>
            <person name="Du L."/>
            <person name="Sobral B.W."/>
        </authorList>
    </citation>
    <scope>NUCLEOTIDE SEQUENCE [LARGE SCALE GENOMIC DNA]</scope>
    <source>
        <strain>S19</strain>
    </source>
</reference>
<accession>B2S980</accession>
<dbReference type="EC" id="4.2.1.19" evidence="1"/>
<dbReference type="EMBL" id="CP000887">
    <property type="protein sequence ID" value="ACD73432.1"/>
    <property type="molecule type" value="Genomic_DNA"/>
</dbReference>
<dbReference type="RefSeq" id="WP_002967034.1">
    <property type="nucleotide sequence ID" value="NC_010742.1"/>
</dbReference>
<dbReference type="SMR" id="B2S980"/>
<dbReference type="GeneID" id="97534656"/>
<dbReference type="KEGG" id="bmc:BAbS19_I19500"/>
<dbReference type="HOGENOM" id="CLU_044308_3_0_5"/>
<dbReference type="UniPathway" id="UPA00031">
    <property type="reaction ID" value="UER00011"/>
</dbReference>
<dbReference type="Proteomes" id="UP000002565">
    <property type="component" value="Chromosome 1"/>
</dbReference>
<dbReference type="GO" id="GO:0005737">
    <property type="term" value="C:cytoplasm"/>
    <property type="evidence" value="ECO:0007669"/>
    <property type="project" value="UniProtKB-SubCell"/>
</dbReference>
<dbReference type="GO" id="GO:0004424">
    <property type="term" value="F:imidazoleglycerol-phosphate dehydratase activity"/>
    <property type="evidence" value="ECO:0007669"/>
    <property type="project" value="UniProtKB-UniRule"/>
</dbReference>
<dbReference type="GO" id="GO:0000105">
    <property type="term" value="P:L-histidine biosynthetic process"/>
    <property type="evidence" value="ECO:0007669"/>
    <property type="project" value="UniProtKB-UniRule"/>
</dbReference>
<dbReference type="CDD" id="cd07914">
    <property type="entry name" value="IGPD"/>
    <property type="match status" value="1"/>
</dbReference>
<dbReference type="FunFam" id="3.30.230.40:FF:000001">
    <property type="entry name" value="Imidazoleglycerol-phosphate dehydratase HisB"/>
    <property type="match status" value="1"/>
</dbReference>
<dbReference type="FunFam" id="3.30.230.40:FF:000003">
    <property type="entry name" value="Imidazoleglycerol-phosphate dehydratase HisB"/>
    <property type="match status" value="1"/>
</dbReference>
<dbReference type="Gene3D" id="3.30.230.40">
    <property type="entry name" value="Imidazole glycerol phosphate dehydratase, domain 1"/>
    <property type="match status" value="2"/>
</dbReference>
<dbReference type="HAMAP" id="MF_00076">
    <property type="entry name" value="HisB"/>
    <property type="match status" value="1"/>
</dbReference>
<dbReference type="InterPro" id="IPR038494">
    <property type="entry name" value="IGPD_sf"/>
</dbReference>
<dbReference type="InterPro" id="IPR000807">
    <property type="entry name" value="ImidazoleglycerolP_deHydtase"/>
</dbReference>
<dbReference type="InterPro" id="IPR020565">
    <property type="entry name" value="ImidazoleglycerP_deHydtase_CS"/>
</dbReference>
<dbReference type="InterPro" id="IPR020568">
    <property type="entry name" value="Ribosomal_Su5_D2-typ_SF"/>
</dbReference>
<dbReference type="NCBIfam" id="NF002109">
    <property type="entry name" value="PRK00951.1-5"/>
    <property type="match status" value="1"/>
</dbReference>
<dbReference type="NCBIfam" id="NF002111">
    <property type="entry name" value="PRK00951.2-1"/>
    <property type="match status" value="1"/>
</dbReference>
<dbReference type="NCBIfam" id="NF002114">
    <property type="entry name" value="PRK00951.2-4"/>
    <property type="match status" value="1"/>
</dbReference>
<dbReference type="PANTHER" id="PTHR23133:SF2">
    <property type="entry name" value="IMIDAZOLEGLYCEROL-PHOSPHATE DEHYDRATASE"/>
    <property type="match status" value="1"/>
</dbReference>
<dbReference type="PANTHER" id="PTHR23133">
    <property type="entry name" value="IMIDAZOLEGLYCEROL-PHOSPHATE DEHYDRATASE HIS7"/>
    <property type="match status" value="1"/>
</dbReference>
<dbReference type="Pfam" id="PF00475">
    <property type="entry name" value="IGPD"/>
    <property type="match status" value="1"/>
</dbReference>
<dbReference type="SUPFAM" id="SSF54211">
    <property type="entry name" value="Ribosomal protein S5 domain 2-like"/>
    <property type="match status" value="2"/>
</dbReference>
<dbReference type="PROSITE" id="PS00954">
    <property type="entry name" value="IGP_DEHYDRATASE_1"/>
    <property type="match status" value="1"/>
</dbReference>
<dbReference type="PROSITE" id="PS00955">
    <property type="entry name" value="IGP_DEHYDRATASE_2"/>
    <property type="match status" value="1"/>
</dbReference>
<evidence type="ECO:0000255" key="1">
    <source>
        <dbReference type="HAMAP-Rule" id="MF_00076"/>
    </source>
</evidence>
<name>HIS7_BRUA1</name>
<comment type="catalytic activity">
    <reaction evidence="1">
        <text>D-erythro-1-(imidazol-4-yl)glycerol 3-phosphate = 3-(imidazol-4-yl)-2-oxopropyl phosphate + H2O</text>
        <dbReference type="Rhea" id="RHEA:11040"/>
        <dbReference type="ChEBI" id="CHEBI:15377"/>
        <dbReference type="ChEBI" id="CHEBI:57766"/>
        <dbReference type="ChEBI" id="CHEBI:58278"/>
        <dbReference type="EC" id="4.2.1.19"/>
    </reaction>
</comment>
<comment type="pathway">
    <text evidence="1">Amino-acid biosynthesis; L-histidine biosynthesis; L-histidine from 5-phospho-alpha-D-ribose 1-diphosphate: step 6/9.</text>
</comment>
<comment type="subcellular location">
    <subcellularLocation>
        <location evidence="1">Cytoplasm</location>
    </subcellularLocation>
</comment>
<comment type="similarity">
    <text evidence="1">Belongs to the imidazoleglycerol-phosphate dehydratase family.</text>
</comment>